<protein>
    <recommendedName>
        <fullName evidence="1">tRNA (guanine-N(1)-)-methyltransferase</fullName>
        <ecNumber evidence="1">2.1.1.228</ecNumber>
    </recommendedName>
    <alternativeName>
        <fullName evidence="1">M1G-methyltransferase</fullName>
    </alternativeName>
    <alternativeName>
        <fullName evidence="1">tRNA [GM37] methyltransferase</fullName>
    </alternativeName>
</protein>
<comment type="function">
    <text evidence="1">Specifically methylates guanosine-37 in various tRNAs.</text>
</comment>
<comment type="catalytic activity">
    <reaction evidence="1">
        <text>guanosine(37) in tRNA + S-adenosyl-L-methionine = N(1)-methylguanosine(37) in tRNA + S-adenosyl-L-homocysteine + H(+)</text>
        <dbReference type="Rhea" id="RHEA:36899"/>
        <dbReference type="Rhea" id="RHEA-COMP:10145"/>
        <dbReference type="Rhea" id="RHEA-COMP:10147"/>
        <dbReference type="ChEBI" id="CHEBI:15378"/>
        <dbReference type="ChEBI" id="CHEBI:57856"/>
        <dbReference type="ChEBI" id="CHEBI:59789"/>
        <dbReference type="ChEBI" id="CHEBI:73542"/>
        <dbReference type="ChEBI" id="CHEBI:74269"/>
        <dbReference type="EC" id="2.1.1.228"/>
    </reaction>
</comment>
<comment type="subunit">
    <text evidence="1">Homodimer.</text>
</comment>
<comment type="subcellular location">
    <subcellularLocation>
        <location evidence="1">Cytoplasm</location>
    </subcellularLocation>
</comment>
<comment type="similarity">
    <text evidence="1">Belongs to the RNA methyltransferase TrmD family.</text>
</comment>
<gene>
    <name evidence="1" type="primary">trmD</name>
    <name type="ordered locus">BT0698</name>
</gene>
<keyword id="KW-0963">Cytoplasm</keyword>
<keyword id="KW-0489">Methyltransferase</keyword>
<keyword id="KW-1185">Reference proteome</keyword>
<keyword id="KW-0949">S-adenosyl-L-methionine</keyword>
<keyword id="KW-0808">Transferase</keyword>
<keyword id="KW-0819">tRNA processing</keyword>
<accession>A1R0C2</accession>
<proteinExistence type="inferred from homology"/>
<feature type="chain" id="PRO_1000147075" description="tRNA (guanine-N(1)-)-methyltransferase">
    <location>
        <begin position="1"/>
        <end position="239"/>
    </location>
</feature>
<feature type="binding site" evidence="1">
    <location>
        <position position="110"/>
    </location>
    <ligand>
        <name>S-adenosyl-L-methionine</name>
        <dbReference type="ChEBI" id="CHEBI:59789"/>
    </ligand>
</feature>
<feature type="binding site" evidence="1">
    <location>
        <begin position="130"/>
        <end position="135"/>
    </location>
    <ligand>
        <name>S-adenosyl-L-methionine</name>
        <dbReference type="ChEBI" id="CHEBI:59789"/>
    </ligand>
</feature>
<reference key="1">
    <citation type="submission" date="2004-12" db="EMBL/GenBank/DDBJ databases">
        <title>The genome sequence of Borrelia hermsii and Borrelia turicatae: comparative analysis of two agents of endemic N. America relapsing fever.</title>
        <authorList>
            <person name="Porcella S.F."/>
            <person name="Raffel S.J."/>
            <person name="Schrumpf M.E."/>
            <person name="Montgomery B."/>
            <person name="Smith T."/>
            <person name="Schwan T.G."/>
        </authorList>
    </citation>
    <scope>NUCLEOTIDE SEQUENCE [LARGE SCALE GENOMIC DNA]</scope>
    <source>
        <strain>91E135</strain>
    </source>
</reference>
<dbReference type="EC" id="2.1.1.228" evidence="1"/>
<dbReference type="EMBL" id="CP000049">
    <property type="protein sequence ID" value="AAX18014.1"/>
    <property type="molecule type" value="Genomic_DNA"/>
</dbReference>
<dbReference type="RefSeq" id="WP_011772632.1">
    <property type="nucleotide sequence ID" value="NC_008710.1"/>
</dbReference>
<dbReference type="SMR" id="A1R0C2"/>
<dbReference type="KEGG" id="btu:BT0698"/>
<dbReference type="eggNOG" id="COG0336">
    <property type="taxonomic scope" value="Bacteria"/>
</dbReference>
<dbReference type="HOGENOM" id="CLU_047363_0_1_12"/>
<dbReference type="Proteomes" id="UP000001205">
    <property type="component" value="Chromosome"/>
</dbReference>
<dbReference type="GO" id="GO:0005829">
    <property type="term" value="C:cytosol"/>
    <property type="evidence" value="ECO:0007669"/>
    <property type="project" value="TreeGrafter"/>
</dbReference>
<dbReference type="GO" id="GO:0052906">
    <property type="term" value="F:tRNA (guanine(37)-N1)-methyltransferase activity"/>
    <property type="evidence" value="ECO:0007669"/>
    <property type="project" value="UniProtKB-UniRule"/>
</dbReference>
<dbReference type="GO" id="GO:0002939">
    <property type="term" value="P:tRNA N1-guanine methylation"/>
    <property type="evidence" value="ECO:0007669"/>
    <property type="project" value="TreeGrafter"/>
</dbReference>
<dbReference type="CDD" id="cd18080">
    <property type="entry name" value="TrmD-like"/>
    <property type="match status" value="1"/>
</dbReference>
<dbReference type="FunFam" id="3.40.1280.10:FF:000001">
    <property type="entry name" value="tRNA (guanine-N(1)-)-methyltransferase"/>
    <property type="match status" value="1"/>
</dbReference>
<dbReference type="Gene3D" id="3.40.1280.10">
    <property type="match status" value="1"/>
</dbReference>
<dbReference type="Gene3D" id="1.10.1270.20">
    <property type="entry name" value="tRNA(m1g37)methyltransferase, domain 2"/>
    <property type="match status" value="1"/>
</dbReference>
<dbReference type="HAMAP" id="MF_00605">
    <property type="entry name" value="TrmD"/>
    <property type="match status" value="1"/>
</dbReference>
<dbReference type="InterPro" id="IPR029028">
    <property type="entry name" value="Alpha/beta_knot_MTases"/>
</dbReference>
<dbReference type="InterPro" id="IPR023148">
    <property type="entry name" value="tRNA_m1G_MeTrfase_C_sf"/>
</dbReference>
<dbReference type="InterPro" id="IPR002649">
    <property type="entry name" value="tRNA_m1G_MeTrfase_TrmD"/>
</dbReference>
<dbReference type="InterPro" id="IPR029026">
    <property type="entry name" value="tRNA_m1G_MTases_N"/>
</dbReference>
<dbReference type="InterPro" id="IPR016009">
    <property type="entry name" value="tRNA_MeTrfase_TRMD/TRM10"/>
</dbReference>
<dbReference type="NCBIfam" id="NF000648">
    <property type="entry name" value="PRK00026.1"/>
    <property type="match status" value="1"/>
</dbReference>
<dbReference type="NCBIfam" id="TIGR00088">
    <property type="entry name" value="trmD"/>
    <property type="match status" value="1"/>
</dbReference>
<dbReference type="PANTHER" id="PTHR46417">
    <property type="entry name" value="TRNA (GUANINE-N(1)-)-METHYLTRANSFERASE"/>
    <property type="match status" value="1"/>
</dbReference>
<dbReference type="PANTHER" id="PTHR46417:SF1">
    <property type="entry name" value="TRNA (GUANINE-N(1)-)-METHYLTRANSFERASE"/>
    <property type="match status" value="1"/>
</dbReference>
<dbReference type="Pfam" id="PF01746">
    <property type="entry name" value="tRNA_m1G_MT"/>
    <property type="match status" value="1"/>
</dbReference>
<dbReference type="PIRSF" id="PIRSF000386">
    <property type="entry name" value="tRNA_mtase"/>
    <property type="match status" value="1"/>
</dbReference>
<dbReference type="SUPFAM" id="SSF75217">
    <property type="entry name" value="alpha/beta knot"/>
    <property type="match status" value="1"/>
</dbReference>
<sequence>MKITILSLFPSIITPFFENSIMKKVISKGIISCEVISIRNFSDDKHKRCDDIPYGGGAGMVLKAQPISAALDYVNARSKTTIFVSPSGLKYNQKLAYDLSKKDELVIICGRYEGLDQRIIDLYVDFEISVGDYVLSSGEVAALVIIDSVYRLLEGVINPNSLLEESFSCECGLLEYPHYTRPYEFKGLEVPNVLLSGHHEEIRKWRFMKSIEKTKKNRYDLYLKYLEMRGENDGFNKKN</sequence>
<organism>
    <name type="scientific">Borrelia turicatae (strain 91E135)</name>
    <dbReference type="NCBI Taxonomy" id="314724"/>
    <lineage>
        <taxon>Bacteria</taxon>
        <taxon>Pseudomonadati</taxon>
        <taxon>Spirochaetota</taxon>
        <taxon>Spirochaetia</taxon>
        <taxon>Spirochaetales</taxon>
        <taxon>Borreliaceae</taxon>
        <taxon>Borrelia</taxon>
    </lineage>
</organism>
<evidence type="ECO:0000255" key="1">
    <source>
        <dbReference type="HAMAP-Rule" id="MF_00605"/>
    </source>
</evidence>
<name>TRMD_BORT9</name>